<name>RS12_DEHMB</name>
<evidence type="ECO:0000250" key="1"/>
<evidence type="ECO:0000255" key="2">
    <source>
        <dbReference type="HAMAP-Rule" id="MF_00403"/>
    </source>
</evidence>
<evidence type="ECO:0000256" key="3">
    <source>
        <dbReference type="SAM" id="MobiDB-lite"/>
    </source>
</evidence>
<evidence type="ECO:0000305" key="4"/>
<comment type="function">
    <text evidence="2">With S4 and S5 plays an important role in translational accuracy.</text>
</comment>
<comment type="function">
    <text evidence="2">Interacts with and stabilizes bases of the 16S rRNA that are involved in tRNA selection in the A site and with the mRNA backbone. Located at the interface of the 30S and 50S subunits, it traverses the body of the 30S subunit contacting proteins on the other side and probably holding the rRNA structure together. The combined cluster of proteins S8, S12 and S17 appears to hold together the shoulder and platform of the 30S subunit.</text>
</comment>
<comment type="subunit">
    <text evidence="2">Part of the 30S ribosomal subunit. Contacts proteins S8 and S17. May interact with IF1 in the 30S initiation complex.</text>
</comment>
<comment type="similarity">
    <text evidence="2">Belongs to the universal ribosomal protein uS12 family.</text>
</comment>
<accession>A5FS00</accession>
<sequence length="144" mass="15765">MPTVNQLVRKGRTSAAKKYKAPALHYSFNSLRNKVAFGDGSPQKRGVCTQVKTTTPKKPNSALRKIARVRLSNHMEVTAYIPGEGHNLQEHSVVLIRGGRVPDLPGVRYHIIRGTLDTAGVANRQQGRSRYGAKKGKAAPAKKK</sequence>
<feature type="chain" id="PRO_1000080392" description="Small ribosomal subunit protein uS12">
    <location>
        <begin position="1"/>
        <end position="144"/>
    </location>
</feature>
<feature type="region of interest" description="Disordered" evidence="3">
    <location>
        <begin position="125"/>
        <end position="144"/>
    </location>
</feature>
<feature type="compositionally biased region" description="Basic residues" evidence="3">
    <location>
        <begin position="131"/>
        <end position="144"/>
    </location>
</feature>
<feature type="modified residue" description="3-methylthioaspartic acid" evidence="1">
    <location>
        <position position="103"/>
    </location>
</feature>
<proteinExistence type="inferred from homology"/>
<organism>
    <name type="scientific">Dehalococcoides mccartyi (strain ATCC BAA-2100 / JCM 16839 / KCTC 5957 / BAV1)</name>
    <dbReference type="NCBI Taxonomy" id="216389"/>
    <lineage>
        <taxon>Bacteria</taxon>
        <taxon>Bacillati</taxon>
        <taxon>Chloroflexota</taxon>
        <taxon>Dehalococcoidia</taxon>
        <taxon>Dehalococcoidales</taxon>
        <taxon>Dehalococcoidaceae</taxon>
        <taxon>Dehalococcoides</taxon>
    </lineage>
</organism>
<reference key="1">
    <citation type="submission" date="2007-05" db="EMBL/GenBank/DDBJ databases">
        <title>Complete sequence of Dehalococcoides sp. BAV1.</title>
        <authorList>
            <consortium name="US DOE Joint Genome Institute"/>
            <person name="Copeland A."/>
            <person name="Lucas S."/>
            <person name="Lapidus A."/>
            <person name="Barry K."/>
            <person name="Detter J.C."/>
            <person name="Glavina del Rio T."/>
            <person name="Hammon N."/>
            <person name="Israni S."/>
            <person name="Pitluck S."/>
            <person name="Lowry S."/>
            <person name="Clum A."/>
            <person name="Schmutz J."/>
            <person name="Larimer F."/>
            <person name="Land M."/>
            <person name="Hauser L."/>
            <person name="Kyrpides N."/>
            <person name="Kim E."/>
            <person name="Ritalahti K.M."/>
            <person name="Loeffler F."/>
            <person name="Richardson P."/>
        </authorList>
    </citation>
    <scope>NUCLEOTIDE SEQUENCE [LARGE SCALE GENOMIC DNA]</scope>
    <source>
        <strain>ATCC BAA-2100 / JCM 16839 / KCTC 5957 / BAV1</strain>
    </source>
</reference>
<dbReference type="EMBL" id="CP000688">
    <property type="protein sequence ID" value="ABQ17032.1"/>
    <property type="molecule type" value="Genomic_DNA"/>
</dbReference>
<dbReference type="SMR" id="A5FS00"/>
<dbReference type="KEGG" id="deb:DehaBAV1_0447"/>
<dbReference type="PATRIC" id="fig|216389.18.peg.490"/>
<dbReference type="HOGENOM" id="CLU_104295_1_2_0"/>
<dbReference type="GO" id="GO:0015935">
    <property type="term" value="C:small ribosomal subunit"/>
    <property type="evidence" value="ECO:0007669"/>
    <property type="project" value="InterPro"/>
</dbReference>
<dbReference type="GO" id="GO:0019843">
    <property type="term" value="F:rRNA binding"/>
    <property type="evidence" value="ECO:0007669"/>
    <property type="project" value="UniProtKB-UniRule"/>
</dbReference>
<dbReference type="GO" id="GO:0003735">
    <property type="term" value="F:structural constituent of ribosome"/>
    <property type="evidence" value="ECO:0007669"/>
    <property type="project" value="InterPro"/>
</dbReference>
<dbReference type="GO" id="GO:0000049">
    <property type="term" value="F:tRNA binding"/>
    <property type="evidence" value="ECO:0007669"/>
    <property type="project" value="UniProtKB-UniRule"/>
</dbReference>
<dbReference type="GO" id="GO:0006412">
    <property type="term" value="P:translation"/>
    <property type="evidence" value="ECO:0007669"/>
    <property type="project" value="UniProtKB-UniRule"/>
</dbReference>
<dbReference type="CDD" id="cd03368">
    <property type="entry name" value="Ribosomal_S12"/>
    <property type="match status" value="1"/>
</dbReference>
<dbReference type="FunFam" id="2.40.50.140:FF:000001">
    <property type="entry name" value="30S ribosomal protein S12"/>
    <property type="match status" value="1"/>
</dbReference>
<dbReference type="Gene3D" id="2.40.50.140">
    <property type="entry name" value="Nucleic acid-binding proteins"/>
    <property type="match status" value="1"/>
</dbReference>
<dbReference type="HAMAP" id="MF_00403_B">
    <property type="entry name" value="Ribosomal_uS12_B"/>
    <property type="match status" value="1"/>
</dbReference>
<dbReference type="InterPro" id="IPR012340">
    <property type="entry name" value="NA-bd_OB-fold"/>
</dbReference>
<dbReference type="InterPro" id="IPR006032">
    <property type="entry name" value="Ribosomal_uS12"/>
</dbReference>
<dbReference type="InterPro" id="IPR005679">
    <property type="entry name" value="Ribosomal_uS12_bac"/>
</dbReference>
<dbReference type="NCBIfam" id="TIGR00981">
    <property type="entry name" value="rpsL_bact"/>
    <property type="match status" value="1"/>
</dbReference>
<dbReference type="PANTHER" id="PTHR11652">
    <property type="entry name" value="30S RIBOSOMAL PROTEIN S12 FAMILY MEMBER"/>
    <property type="match status" value="1"/>
</dbReference>
<dbReference type="Pfam" id="PF00164">
    <property type="entry name" value="Ribosom_S12_S23"/>
    <property type="match status" value="1"/>
</dbReference>
<dbReference type="PRINTS" id="PR01034">
    <property type="entry name" value="RIBOSOMALS12"/>
</dbReference>
<dbReference type="SUPFAM" id="SSF50249">
    <property type="entry name" value="Nucleic acid-binding proteins"/>
    <property type="match status" value="1"/>
</dbReference>
<dbReference type="PROSITE" id="PS00055">
    <property type="entry name" value="RIBOSOMAL_S12"/>
    <property type="match status" value="1"/>
</dbReference>
<protein>
    <recommendedName>
        <fullName evidence="2">Small ribosomal subunit protein uS12</fullName>
    </recommendedName>
    <alternativeName>
        <fullName evidence="4">30S ribosomal protein S12</fullName>
    </alternativeName>
</protein>
<gene>
    <name evidence="2" type="primary">rpsL</name>
    <name type="ordered locus">DehaBAV1_0447</name>
</gene>
<keyword id="KW-0488">Methylation</keyword>
<keyword id="KW-0687">Ribonucleoprotein</keyword>
<keyword id="KW-0689">Ribosomal protein</keyword>
<keyword id="KW-0694">RNA-binding</keyword>
<keyword id="KW-0699">rRNA-binding</keyword>
<keyword id="KW-0820">tRNA-binding</keyword>